<organism>
    <name type="scientific">Rattus norvegicus</name>
    <name type="common">Rat</name>
    <dbReference type="NCBI Taxonomy" id="10116"/>
    <lineage>
        <taxon>Eukaryota</taxon>
        <taxon>Metazoa</taxon>
        <taxon>Chordata</taxon>
        <taxon>Craniata</taxon>
        <taxon>Vertebrata</taxon>
        <taxon>Euteleostomi</taxon>
        <taxon>Mammalia</taxon>
        <taxon>Eutheria</taxon>
        <taxon>Euarchontoglires</taxon>
        <taxon>Glires</taxon>
        <taxon>Rodentia</taxon>
        <taxon>Myomorpha</taxon>
        <taxon>Muroidea</taxon>
        <taxon>Muridae</taxon>
        <taxon>Murinae</taxon>
        <taxon>Rattus</taxon>
    </lineage>
</organism>
<feature type="chain" id="PRO_0000261436" description="Formin-binding protein 1-like">
    <location>
        <begin position="1"/>
        <end position="605"/>
    </location>
</feature>
<feature type="domain" description="F-BAR" evidence="5">
    <location>
        <begin position="1"/>
        <end position="263"/>
    </location>
</feature>
<feature type="domain" description="REM-1" evidence="6">
    <location>
        <begin position="397"/>
        <end position="474"/>
    </location>
</feature>
<feature type="domain" description="SH3" evidence="4">
    <location>
        <begin position="538"/>
        <end position="599"/>
    </location>
</feature>
<feature type="region of interest" description="Interaction with CDC42" evidence="1">
    <location>
        <begin position="245"/>
        <end position="535"/>
    </location>
</feature>
<feature type="region of interest" description="Disordered" evidence="7">
    <location>
        <begin position="325"/>
        <end position="345"/>
    </location>
</feature>
<feature type="region of interest" description="Disordered" evidence="7">
    <location>
        <begin position="480"/>
        <end position="539"/>
    </location>
</feature>
<feature type="region of interest" description="Interaction with DNM1" evidence="1">
    <location>
        <begin position="522"/>
        <end position="605"/>
    </location>
</feature>
<feature type="region of interest" description="Interaction with DAAM1, DIAPH1 and DIAPH2" evidence="1">
    <location>
        <begin position="541"/>
        <end position="605"/>
    </location>
</feature>
<feature type="region of interest" description="Interaction with DNM2 and WASL" evidence="1">
    <location>
        <begin position="541"/>
        <end position="597"/>
    </location>
</feature>
<feature type="coiled-coil region" evidence="1">
    <location>
        <begin position="66"/>
        <end position="258"/>
    </location>
</feature>
<feature type="coiled-coil region" evidence="1">
    <location>
        <begin position="392"/>
        <end position="484"/>
    </location>
</feature>
<feature type="compositionally biased region" description="Basic and acidic residues" evidence="7">
    <location>
        <begin position="480"/>
        <end position="490"/>
    </location>
</feature>
<feature type="compositionally biased region" description="Acidic residues" evidence="7">
    <location>
        <begin position="527"/>
        <end position="536"/>
    </location>
</feature>
<feature type="site" description="Mediates end-to-end attachment of dimers" evidence="1">
    <location>
        <position position="165"/>
    </location>
</feature>
<feature type="modified residue" description="Phosphoserine" evidence="11">
    <location>
        <position position="295"/>
    </location>
</feature>
<feature type="modified residue" description="Phosphoserine" evidence="2">
    <location>
        <position position="488"/>
    </location>
</feature>
<feature type="modified residue" description="Phosphoserine" evidence="11">
    <location>
        <position position="501"/>
    </location>
</feature>
<feature type="modified residue" description="Phosphoserine" evidence="3">
    <location>
        <position position="505"/>
    </location>
</feature>
<feature type="splice variant" id="VSP_021714" description="In isoform 3." evidence="9">
    <location>
        <begin position="331"/>
        <end position="388"/>
    </location>
</feature>
<feature type="splice variant" id="VSP_021715" description="In isoform 2 and isoform 3." evidence="9">
    <original>S</original>
    <variation>AVTYI</variation>
    <location>
        <position position="605"/>
    </location>
</feature>
<feature type="mutagenesis site" description="Impairs membrane tubulation and suppression of neurite elongation." evidence="8">
    <original>KK</original>
    <variation>QQ</variation>
    <location>
        <begin position="51"/>
        <end position="52"/>
    </location>
</feature>
<evidence type="ECO:0000250" key="1"/>
<evidence type="ECO:0000250" key="2">
    <source>
        <dbReference type="UniProtKB" id="Q5T0N5"/>
    </source>
</evidence>
<evidence type="ECO:0000250" key="3">
    <source>
        <dbReference type="UniProtKB" id="Q8K012"/>
    </source>
</evidence>
<evidence type="ECO:0000255" key="4">
    <source>
        <dbReference type="PROSITE-ProRule" id="PRU00192"/>
    </source>
</evidence>
<evidence type="ECO:0000255" key="5">
    <source>
        <dbReference type="PROSITE-ProRule" id="PRU01077"/>
    </source>
</evidence>
<evidence type="ECO:0000255" key="6">
    <source>
        <dbReference type="PROSITE-ProRule" id="PRU01207"/>
    </source>
</evidence>
<evidence type="ECO:0000256" key="7">
    <source>
        <dbReference type="SAM" id="MobiDB-lite"/>
    </source>
</evidence>
<evidence type="ECO:0000269" key="8">
    <source>
    </source>
</evidence>
<evidence type="ECO:0000303" key="9">
    <source>
    </source>
</evidence>
<evidence type="ECO:0000305" key="10"/>
<evidence type="ECO:0007744" key="11">
    <source>
    </source>
</evidence>
<proteinExistence type="evidence at protein level"/>
<sequence length="605" mass="69974">MSWGTELWDQFDSLDKHTQWGIDFLERYAKFVKERIEIEQNYAKQLRNLVKKYCPKRSSKDEEPRFTSCIAFFNILNELNDYAGQREVVAEEMAHRVYGELMRYAHDLKTERKMHLQEGRKAQQYLDMCWKQMDNSKKKFERECREAEKAQQSYERLDNDTNATKADVEKAKQQLNLRTHMADENKNEYAAQLQNFNGEQHKHFYVVIPQIYKQLQEMDERRTIKLSECYRGFADSERKVIPIISKCLEGMILAAKSVDERRDSQMVVDSFKSGFEPPGDFPFEDYSQHIYRTVSDGTISASKQEGGKMDSKSTAGKAKGKLWLFGKKPKPQSPPLTPTSLFTSSPPNGSQFLTLSIEPVHYCMNEIKTGKPRIPSFRSLKRGWSMKMGPALEDFSHLPPEQRRKKLQQRIDELNRGLQKESDQKEALNKMKDVYEKNPQMGDPGSLQPKLAETMNNIDRLRMEIHKNEAWLSEVEGKTGVRGDRRHSSDINHLVTQGRESPEGSYTDDANQEVRGPPQQHGHHSEFDDEFEDDDPLPAIGHCKAIYPFDGHNEGTLAMKEGEVLYIIEEDKGDGWTRARRQNGEEGYVPTTYIDVTLEKNSKGS</sequence>
<dbReference type="EMBL" id="AB250295">
    <property type="protein sequence ID" value="BAE79635.1"/>
    <property type="molecule type" value="mRNA"/>
</dbReference>
<dbReference type="EMBL" id="AB250296">
    <property type="protein sequence ID" value="BAE79636.1"/>
    <property type="molecule type" value="mRNA"/>
</dbReference>
<dbReference type="EMBL" id="AABR03012297">
    <property type="status" value="NOT_ANNOTATED_CDS"/>
    <property type="molecule type" value="Genomic_DNA"/>
</dbReference>
<dbReference type="RefSeq" id="NP_001034698.1">
    <molecule id="Q2HWF0-2"/>
    <property type="nucleotide sequence ID" value="NM_001039609.2"/>
</dbReference>
<dbReference type="RefSeq" id="XP_063138021.1">
    <molecule id="Q2HWF0-3"/>
    <property type="nucleotide sequence ID" value="XM_063281951.1"/>
</dbReference>
<dbReference type="SMR" id="Q2HWF0"/>
<dbReference type="FunCoup" id="Q2HWF0">
    <property type="interactions" value="2180"/>
</dbReference>
<dbReference type="STRING" id="10116.ENSRNOP00000052531"/>
<dbReference type="iPTMnet" id="Q2HWF0"/>
<dbReference type="PhosphoSitePlus" id="Q2HWF0"/>
<dbReference type="PaxDb" id="10116-ENSRNOP00000052531"/>
<dbReference type="Ensembl" id="ENSRNOT00000104633.1">
    <molecule id="Q2HWF0-2"/>
    <property type="protein sequence ID" value="ENSRNOP00000090789.1"/>
    <property type="gene ID" value="ENSRNOG00000013798.9"/>
</dbReference>
<dbReference type="Ensembl" id="ENSRNOT00000116752.1">
    <molecule id="Q2HWF0-3"/>
    <property type="protein sequence ID" value="ENSRNOP00000083605.1"/>
    <property type="gene ID" value="ENSRNOG00000013798.9"/>
</dbReference>
<dbReference type="GeneID" id="310839"/>
<dbReference type="KEGG" id="rno:310839"/>
<dbReference type="UCSC" id="RGD:1305386">
    <molecule id="Q2HWF0-1"/>
    <property type="organism name" value="rat"/>
</dbReference>
<dbReference type="AGR" id="RGD:1305386"/>
<dbReference type="CTD" id="54874"/>
<dbReference type="RGD" id="1305386">
    <property type="gene designation" value="Fnbp1l"/>
</dbReference>
<dbReference type="VEuPathDB" id="HostDB:ENSRNOG00000013798"/>
<dbReference type="eggNOG" id="KOG3565">
    <property type="taxonomic scope" value="Eukaryota"/>
</dbReference>
<dbReference type="GeneTree" id="ENSGT00950000183047"/>
<dbReference type="HOGENOM" id="CLU_023320_2_0_1"/>
<dbReference type="InParanoid" id="Q2HWF0"/>
<dbReference type="OMA" id="YADGWWE"/>
<dbReference type="PhylomeDB" id="Q2HWF0"/>
<dbReference type="TreeFam" id="TF351162"/>
<dbReference type="Reactome" id="R-RNO-8856828">
    <property type="pathway name" value="Clathrin-mediated endocytosis"/>
</dbReference>
<dbReference type="PRO" id="PR:Q2HWF0"/>
<dbReference type="Proteomes" id="UP000002494">
    <property type="component" value="Chromosome 2"/>
</dbReference>
<dbReference type="Bgee" id="ENSRNOG00000013798">
    <property type="expression patterns" value="Expressed in lung and 19 other cell types or tissues"/>
</dbReference>
<dbReference type="GO" id="GO:0005938">
    <property type="term" value="C:cell cortex"/>
    <property type="evidence" value="ECO:0007669"/>
    <property type="project" value="UniProtKB-SubCell"/>
</dbReference>
<dbReference type="GO" id="GO:0005737">
    <property type="term" value="C:cytoplasm"/>
    <property type="evidence" value="ECO:0000266"/>
    <property type="project" value="RGD"/>
</dbReference>
<dbReference type="GO" id="GO:0031410">
    <property type="term" value="C:cytoplasmic vesicle"/>
    <property type="evidence" value="ECO:0000266"/>
    <property type="project" value="RGD"/>
</dbReference>
<dbReference type="GO" id="GO:0005856">
    <property type="term" value="C:cytoskeleton"/>
    <property type="evidence" value="ECO:0007669"/>
    <property type="project" value="UniProtKB-SubCell"/>
</dbReference>
<dbReference type="GO" id="GO:0005829">
    <property type="term" value="C:cytosol"/>
    <property type="evidence" value="ECO:0007669"/>
    <property type="project" value="Ensembl"/>
</dbReference>
<dbReference type="GO" id="GO:0005886">
    <property type="term" value="C:plasma membrane"/>
    <property type="evidence" value="ECO:0007669"/>
    <property type="project" value="UniProtKB-SubCell"/>
</dbReference>
<dbReference type="GO" id="GO:0051020">
    <property type="term" value="F:GTPase binding"/>
    <property type="evidence" value="ECO:0000266"/>
    <property type="project" value="RGD"/>
</dbReference>
<dbReference type="GO" id="GO:0008289">
    <property type="term" value="F:lipid binding"/>
    <property type="evidence" value="ECO:0007669"/>
    <property type="project" value="UniProtKB-KW"/>
</dbReference>
<dbReference type="GO" id="GO:0006914">
    <property type="term" value="P:autophagy"/>
    <property type="evidence" value="ECO:0007669"/>
    <property type="project" value="UniProtKB-KW"/>
</dbReference>
<dbReference type="GO" id="GO:0030154">
    <property type="term" value="P:cell differentiation"/>
    <property type="evidence" value="ECO:0007669"/>
    <property type="project" value="UniProtKB-KW"/>
</dbReference>
<dbReference type="GO" id="GO:0060271">
    <property type="term" value="P:cilium assembly"/>
    <property type="evidence" value="ECO:0000266"/>
    <property type="project" value="RGD"/>
</dbReference>
<dbReference type="GO" id="GO:0072583">
    <property type="term" value="P:clathrin-dependent endocytosis"/>
    <property type="evidence" value="ECO:0000266"/>
    <property type="project" value="RGD"/>
</dbReference>
<dbReference type="GO" id="GO:0010324">
    <property type="term" value="P:membrane invagination"/>
    <property type="evidence" value="ECO:0000266"/>
    <property type="project" value="RGD"/>
</dbReference>
<dbReference type="GO" id="GO:0007399">
    <property type="term" value="P:nervous system development"/>
    <property type="evidence" value="ECO:0007669"/>
    <property type="project" value="UniProtKB-KW"/>
</dbReference>
<dbReference type="GO" id="GO:0097320">
    <property type="term" value="P:plasma membrane tubulation"/>
    <property type="evidence" value="ECO:0000266"/>
    <property type="project" value="RGD"/>
</dbReference>
<dbReference type="GO" id="GO:0051491">
    <property type="term" value="P:positive regulation of filopodium assembly"/>
    <property type="evidence" value="ECO:0000266"/>
    <property type="project" value="RGD"/>
</dbReference>
<dbReference type="GO" id="GO:0007165">
    <property type="term" value="P:signal transduction"/>
    <property type="evidence" value="ECO:0007669"/>
    <property type="project" value="InterPro"/>
</dbReference>
<dbReference type="GO" id="GO:0006900">
    <property type="term" value="P:vesicle budding from membrane"/>
    <property type="evidence" value="ECO:0000266"/>
    <property type="project" value="RGD"/>
</dbReference>
<dbReference type="GO" id="GO:0016050">
    <property type="term" value="P:vesicle organization"/>
    <property type="evidence" value="ECO:0000266"/>
    <property type="project" value="RGD"/>
</dbReference>
<dbReference type="GO" id="GO:0030050">
    <property type="term" value="P:vesicle transport along actin filament"/>
    <property type="evidence" value="ECO:0000266"/>
    <property type="project" value="RGD"/>
</dbReference>
<dbReference type="CDD" id="cd07675">
    <property type="entry name" value="F-BAR_FNBP1L"/>
    <property type="match status" value="1"/>
</dbReference>
<dbReference type="CDD" id="cd11628">
    <property type="entry name" value="HR1_CIP4_FNBP1L"/>
    <property type="match status" value="1"/>
</dbReference>
<dbReference type="CDD" id="cd12072">
    <property type="entry name" value="SH3_FNBP1L"/>
    <property type="match status" value="1"/>
</dbReference>
<dbReference type="FunFam" id="1.20.1270.60:FF:000002">
    <property type="entry name" value="Formin-binding protein 1-like isoform 1"/>
    <property type="match status" value="1"/>
</dbReference>
<dbReference type="FunFam" id="2.30.30.40:FF:000017">
    <property type="entry name" value="Formin-binding protein 1-like isoform 1"/>
    <property type="match status" value="1"/>
</dbReference>
<dbReference type="Gene3D" id="6.10.140.470">
    <property type="match status" value="1"/>
</dbReference>
<dbReference type="Gene3D" id="1.20.1270.60">
    <property type="entry name" value="Arfaptin homology (AH) domain/BAR domain"/>
    <property type="match status" value="1"/>
</dbReference>
<dbReference type="Gene3D" id="2.30.30.40">
    <property type="entry name" value="SH3 Domains"/>
    <property type="match status" value="1"/>
</dbReference>
<dbReference type="InterPro" id="IPR027267">
    <property type="entry name" value="AH/BAR_dom_sf"/>
</dbReference>
<dbReference type="InterPro" id="IPR031160">
    <property type="entry name" value="F_BAR"/>
</dbReference>
<dbReference type="InterPro" id="IPR001060">
    <property type="entry name" value="FCH_dom"/>
</dbReference>
<dbReference type="InterPro" id="IPR035494">
    <property type="entry name" value="FNBP1L_F-BAR"/>
</dbReference>
<dbReference type="InterPro" id="IPR035493">
    <property type="entry name" value="FNBP1L_SH3"/>
</dbReference>
<dbReference type="InterPro" id="IPR011072">
    <property type="entry name" value="HR1_rho-bd"/>
</dbReference>
<dbReference type="InterPro" id="IPR036028">
    <property type="entry name" value="SH3-like_dom_sf"/>
</dbReference>
<dbReference type="InterPro" id="IPR001452">
    <property type="entry name" value="SH3_domain"/>
</dbReference>
<dbReference type="PANTHER" id="PTHR15735">
    <property type="entry name" value="FCH AND DOUBLE SH3 DOMAINS PROTEIN"/>
    <property type="match status" value="1"/>
</dbReference>
<dbReference type="PANTHER" id="PTHR15735:SF14">
    <property type="entry name" value="FORMIN-BINDING PROTEIN 1-LIKE"/>
    <property type="match status" value="1"/>
</dbReference>
<dbReference type="Pfam" id="PF00611">
    <property type="entry name" value="FCH"/>
    <property type="match status" value="1"/>
</dbReference>
<dbReference type="Pfam" id="PF00018">
    <property type="entry name" value="SH3_1"/>
    <property type="match status" value="1"/>
</dbReference>
<dbReference type="SMART" id="SM00055">
    <property type="entry name" value="FCH"/>
    <property type="match status" value="1"/>
</dbReference>
<dbReference type="SMART" id="SM00326">
    <property type="entry name" value="SH3"/>
    <property type="match status" value="1"/>
</dbReference>
<dbReference type="SUPFAM" id="SSF103657">
    <property type="entry name" value="BAR/IMD domain-like"/>
    <property type="match status" value="1"/>
</dbReference>
<dbReference type="SUPFAM" id="SSF50044">
    <property type="entry name" value="SH3-domain"/>
    <property type="match status" value="1"/>
</dbReference>
<dbReference type="PROSITE" id="PS51741">
    <property type="entry name" value="F_BAR"/>
    <property type="match status" value="1"/>
</dbReference>
<dbReference type="PROSITE" id="PS51860">
    <property type="entry name" value="REM_1"/>
    <property type="match status" value="1"/>
</dbReference>
<dbReference type="PROSITE" id="PS50002">
    <property type="entry name" value="SH3"/>
    <property type="match status" value="1"/>
</dbReference>
<keyword id="KW-0025">Alternative splicing</keyword>
<keyword id="KW-0072">Autophagy</keyword>
<keyword id="KW-1003">Cell membrane</keyword>
<keyword id="KW-0175">Coiled coil</keyword>
<keyword id="KW-0963">Cytoplasm</keyword>
<keyword id="KW-0968">Cytoplasmic vesicle</keyword>
<keyword id="KW-0206">Cytoskeleton</keyword>
<keyword id="KW-0217">Developmental protein</keyword>
<keyword id="KW-0221">Differentiation</keyword>
<keyword id="KW-0254">Endocytosis</keyword>
<keyword id="KW-0446">Lipid-binding</keyword>
<keyword id="KW-0472">Membrane</keyword>
<keyword id="KW-0524">Neurogenesis</keyword>
<keyword id="KW-0597">Phosphoprotein</keyword>
<keyword id="KW-1185">Reference proteome</keyword>
<keyword id="KW-0728">SH3 domain</keyword>
<protein>
    <recommendedName>
        <fullName>Formin-binding protein 1-like</fullName>
    </recommendedName>
    <alternativeName>
        <fullName>Transducer of Cdc42-dependent actin assembly protein 1</fullName>
        <shortName>Toca-1</shortName>
    </alternativeName>
</protein>
<name>FBP1L_RAT</name>
<gene>
    <name type="primary">Fnbp1l</name>
    <name type="synonym">Toca1</name>
</gene>
<reference key="1">
    <citation type="journal article" date="2006" name="J. Biol. Chem.">
        <title>Regulation of neuronal morphology by Toca-1, an F-BAR/EFC protein that induces plasma membrane invagination.</title>
        <authorList>
            <person name="Kakimoto T."/>
            <person name="Katoh H."/>
            <person name="Negishi M."/>
        </authorList>
    </citation>
    <scope>NUCLEOTIDE SEQUENCE [MRNA] (ISOFORMS 2 AND 3)</scope>
    <scope>FUNCTION</scope>
    <scope>SUBCELLULAR LOCATION</scope>
    <scope>TISSUE SPECIFICITY</scope>
    <scope>DEVELOPMENTAL STAGE</scope>
    <scope>MUTAGENESIS OF 51-LYS-LYS-52</scope>
</reference>
<reference key="2">
    <citation type="journal article" date="2004" name="Nature">
        <title>Genome sequence of the Brown Norway rat yields insights into mammalian evolution.</title>
        <authorList>
            <person name="Gibbs R.A."/>
            <person name="Weinstock G.M."/>
            <person name="Metzker M.L."/>
            <person name="Muzny D.M."/>
            <person name="Sodergren E.J."/>
            <person name="Scherer S."/>
            <person name="Scott G."/>
            <person name="Steffen D."/>
            <person name="Worley K.C."/>
            <person name="Burch P.E."/>
            <person name="Okwuonu G."/>
            <person name="Hines S."/>
            <person name="Lewis L."/>
            <person name="Deramo C."/>
            <person name="Delgado O."/>
            <person name="Dugan-Rocha S."/>
            <person name="Miner G."/>
            <person name="Morgan M."/>
            <person name="Hawes A."/>
            <person name="Gill R."/>
            <person name="Holt R.A."/>
            <person name="Adams M.D."/>
            <person name="Amanatides P.G."/>
            <person name="Baden-Tillson H."/>
            <person name="Barnstead M."/>
            <person name="Chin S."/>
            <person name="Evans C.A."/>
            <person name="Ferriera S."/>
            <person name="Fosler C."/>
            <person name="Glodek A."/>
            <person name="Gu Z."/>
            <person name="Jennings D."/>
            <person name="Kraft C.L."/>
            <person name="Nguyen T."/>
            <person name="Pfannkoch C.M."/>
            <person name="Sitter C."/>
            <person name="Sutton G.G."/>
            <person name="Venter J.C."/>
            <person name="Woodage T."/>
            <person name="Smith D."/>
            <person name="Lee H.-M."/>
            <person name="Gustafson E."/>
            <person name="Cahill P."/>
            <person name="Kana A."/>
            <person name="Doucette-Stamm L."/>
            <person name="Weinstock K."/>
            <person name="Fechtel K."/>
            <person name="Weiss R.B."/>
            <person name="Dunn D.M."/>
            <person name="Green E.D."/>
            <person name="Blakesley R.W."/>
            <person name="Bouffard G.G."/>
            <person name="De Jong P.J."/>
            <person name="Osoegawa K."/>
            <person name="Zhu B."/>
            <person name="Marra M."/>
            <person name="Schein J."/>
            <person name="Bosdet I."/>
            <person name="Fjell C."/>
            <person name="Jones S."/>
            <person name="Krzywinski M."/>
            <person name="Mathewson C."/>
            <person name="Siddiqui A."/>
            <person name="Wye N."/>
            <person name="McPherson J."/>
            <person name="Zhao S."/>
            <person name="Fraser C.M."/>
            <person name="Shetty J."/>
            <person name="Shatsman S."/>
            <person name="Geer K."/>
            <person name="Chen Y."/>
            <person name="Abramzon S."/>
            <person name="Nierman W.C."/>
            <person name="Havlak P.H."/>
            <person name="Chen R."/>
            <person name="Durbin K.J."/>
            <person name="Egan A."/>
            <person name="Ren Y."/>
            <person name="Song X.-Z."/>
            <person name="Li B."/>
            <person name="Liu Y."/>
            <person name="Qin X."/>
            <person name="Cawley S."/>
            <person name="Cooney A.J."/>
            <person name="D'Souza L.M."/>
            <person name="Martin K."/>
            <person name="Wu J.Q."/>
            <person name="Gonzalez-Garay M.L."/>
            <person name="Jackson A.R."/>
            <person name="Kalafus K.J."/>
            <person name="McLeod M.P."/>
            <person name="Milosavljevic A."/>
            <person name="Virk D."/>
            <person name="Volkov A."/>
            <person name="Wheeler D.A."/>
            <person name="Zhang Z."/>
            <person name="Bailey J.A."/>
            <person name="Eichler E.E."/>
            <person name="Tuzun E."/>
            <person name="Birney E."/>
            <person name="Mongin E."/>
            <person name="Ureta-Vidal A."/>
            <person name="Woodwark C."/>
            <person name="Zdobnov E."/>
            <person name="Bork P."/>
            <person name="Suyama M."/>
            <person name="Torrents D."/>
            <person name="Alexandersson M."/>
            <person name="Trask B.J."/>
            <person name="Young J.M."/>
            <person name="Huang H."/>
            <person name="Wang H."/>
            <person name="Xing H."/>
            <person name="Daniels S."/>
            <person name="Gietzen D."/>
            <person name="Schmidt J."/>
            <person name="Stevens K."/>
            <person name="Vitt U."/>
            <person name="Wingrove J."/>
            <person name="Camara F."/>
            <person name="Mar Alba M."/>
            <person name="Abril J.F."/>
            <person name="Guigo R."/>
            <person name="Smit A."/>
            <person name="Dubchak I."/>
            <person name="Rubin E.M."/>
            <person name="Couronne O."/>
            <person name="Poliakov A."/>
            <person name="Huebner N."/>
            <person name="Ganten D."/>
            <person name="Goesele C."/>
            <person name="Hummel O."/>
            <person name="Kreitler T."/>
            <person name="Lee Y.-A."/>
            <person name="Monti J."/>
            <person name="Schulz H."/>
            <person name="Zimdahl H."/>
            <person name="Himmelbauer H."/>
            <person name="Lehrach H."/>
            <person name="Jacob H.J."/>
            <person name="Bromberg S."/>
            <person name="Gullings-Handley J."/>
            <person name="Jensen-Seaman M.I."/>
            <person name="Kwitek A.E."/>
            <person name="Lazar J."/>
            <person name="Pasko D."/>
            <person name="Tonellato P.J."/>
            <person name="Twigger S."/>
            <person name="Ponting C.P."/>
            <person name="Duarte J.M."/>
            <person name="Rice S."/>
            <person name="Goodstadt L."/>
            <person name="Beatson S.A."/>
            <person name="Emes R.D."/>
            <person name="Winter E.E."/>
            <person name="Webber C."/>
            <person name="Brandt P."/>
            <person name="Nyakatura G."/>
            <person name="Adetobi M."/>
            <person name="Chiaromonte F."/>
            <person name="Elnitski L."/>
            <person name="Eswara P."/>
            <person name="Hardison R.C."/>
            <person name="Hou M."/>
            <person name="Kolbe D."/>
            <person name="Makova K."/>
            <person name="Miller W."/>
            <person name="Nekrutenko A."/>
            <person name="Riemer C."/>
            <person name="Schwartz S."/>
            <person name="Taylor J."/>
            <person name="Yang S."/>
            <person name="Zhang Y."/>
            <person name="Lindpaintner K."/>
            <person name="Andrews T.D."/>
            <person name="Caccamo M."/>
            <person name="Clamp M."/>
            <person name="Clarke L."/>
            <person name="Curwen V."/>
            <person name="Durbin R.M."/>
            <person name="Eyras E."/>
            <person name="Searle S.M."/>
            <person name="Cooper G.M."/>
            <person name="Batzoglou S."/>
            <person name="Brudno M."/>
            <person name="Sidow A."/>
            <person name="Stone E.A."/>
            <person name="Payseur B.A."/>
            <person name="Bourque G."/>
            <person name="Lopez-Otin C."/>
            <person name="Puente X.S."/>
            <person name="Chakrabarti K."/>
            <person name="Chatterji S."/>
            <person name="Dewey C."/>
            <person name="Pachter L."/>
            <person name="Bray N."/>
            <person name="Yap V.B."/>
            <person name="Caspi A."/>
            <person name="Tesler G."/>
            <person name="Pevzner P.A."/>
            <person name="Haussler D."/>
            <person name="Roskin K.M."/>
            <person name="Baertsch R."/>
            <person name="Clawson H."/>
            <person name="Furey T.S."/>
            <person name="Hinrichs A.S."/>
            <person name="Karolchik D."/>
            <person name="Kent W.J."/>
            <person name="Rosenbloom K.R."/>
            <person name="Trumbower H."/>
            <person name="Weirauch M."/>
            <person name="Cooper D.N."/>
            <person name="Stenson P.D."/>
            <person name="Ma B."/>
            <person name="Brent M."/>
            <person name="Arumugam M."/>
            <person name="Shteynberg D."/>
            <person name="Copley R.R."/>
            <person name="Taylor M.S."/>
            <person name="Riethman H."/>
            <person name="Mudunuri U."/>
            <person name="Peterson J."/>
            <person name="Guyer M."/>
            <person name="Felsenfeld A."/>
            <person name="Old S."/>
            <person name="Mockrin S."/>
            <person name="Collins F.S."/>
        </authorList>
    </citation>
    <scope>NUCLEOTIDE SEQUENCE [LARGE SCALE GENOMIC DNA]</scope>
    <source>
        <strain>Brown Norway</strain>
    </source>
</reference>
<reference key="3">
    <citation type="journal article" date="2012" name="Nat. Commun.">
        <title>Quantitative maps of protein phosphorylation sites across 14 different rat organs and tissues.</title>
        <authorList>
            <person name="Lundby A."/>
            <person name="Secher A."/>
            <person name="Lage K."/>
            <person name="Nordsborg N.B."/>
            <person name="Dmytriyev A."/>
            <person name="Lundby C."/>
            <person name="Olsen J.V."/>
        </authorList>
    </citation>
    <scope>PHOSPHORYLATION [LARGE SCALE ANALYSIS] AT SER-295 AND SER-501</scope>
    <scope>IDENTIFICATION BY MASS SPECTROMETRY [LARGE SCALE ANALYSIS]</scope>
</reference>
<accession>Q2HWF0</accession>
<accession>Q2HWE9</accession>
<comment type="function">
    <text evidence="1 8">Required to coordinate membrane tubulation with reorganization of the actin cytoskeleton during endocytosis. May bind to lipids such as phosphatidylinositol 4,5-bisphosphate and phosphatidylserine and promote membrane invagination and the formation of tubules. Also promotes CDC42-induced actin polymerization by activating the WASL-WASPIP complex, the predominant form of WASL/N-WASP in cells. Actin polymerization may promote the fission of membrane tubules to form endocytic vesicles. Essential for autophagy of intracellular bacterial pathogens (By similarity). May negatively regulate neurite extension and axon branching in developing neurons.</text>
</comment>
<comment type="subunit">
    <text evidence="1 2">Homodimerizes, the dimers can polymerize end-to-end to form filamentous structures. Interacts with GTP-bound CDC42. Interacts with DAAM1, DIAPH1, DIAPH2, DNM1, DNM2 and WASL/N-WASP. Interacts with ATG3. Interacts (via SH3 domain) with ABI1, WASF2, CDC42 and WIPF1.</text>
</comment>
<comment type="subcellular location">
    <subcellularLocation>
        <location evidence="8">Cytoplasm</location>
    </subcellularLocation>
    <subcellularLocation>
        <location evidence="1">Cytoplasm</location>
        <location evidence="1">Cytoskeleton</location>
    </subcellularLocation>
    <subcellularLocation>
        <location evidence="1">Cytoplasm</location>
        <location evidence="1">Cell cortex</location>
    </subcellularLocation>
    <subcellularLocation>
        <location evidence="1">Cytoplasmic vesicle</location>
    </subcellularLocation>
    <subcellularLocation>
        <location evidence="1">Cell membrane</location>
        <topology evidence="1">Peripheral membrane protein</topology>
        <orientation evidence="1">Cytoplasmic side</orientation>
    </subcellularLocation>
    <text>Localized to the cell body, axons and neurites of differentiating neurons.</text>
</comment>
<comment type="alternative products">
    <event type="alternative splicing"/>
    <isoform>
        <id>Q2HWF0-1</id>
        <name>1</name>
        <sequence type="displayed"/>
    </isoform>
    <isoform>
        <id>Q2HWF0-2</id>
        <name>2</name>
        <name>Long</name>
        <name>L</name>
        <sequence type="described" ref="VSP_021715"/>
    </isoform>
    <isoform>
        <id>Q2HWF0-3</id>
        <name>3</name>
        <name>Short</name>
        <name>S</name>
        <sequence type="described" ref="VSP_021714 VSP_021715"/>
    </isoform>
</comment>
<comment type="tissue specificity">
    <text evidence="8">Isoform 1 is expressed in brain. Isoform 2 is expressed in brain, kidney and lung. Within the brain expression is seen in cortical neurons, hippocampal pyramidal neurons, hypothalamus and piriform cortex.</text>
</comment>
<comment type="developmental stage">
    <text evidence="8">Expression in brain declines from 18 dpc to P8 and is undetectable from P14 onwards.</text>
</comment>
<comment type="domain">
    <text evidence="1">The F-BAR domain binds the phospholipid membrane with its concave surface. The end-to-end polymerization of dimers of these domains provides a curved surface that fits best membranes with around 600 A diameter, and may drive tubulation (By similarity).</text>
</comment>
<comment type="similarity">
    <text evidence="10">Belongs to the FNBP1 family.</text>
</comment>